<proteinExistence type="inferred from homology"/>
<dbReference type="EMBL" id="CP000608">
    <property type="protein sequence ID" value="ABO47445.1"/>
    <property type="molecule type" value="Genomic_DNA"/>
</dbReference>
<dbReference type="RefSeq" id="WP_003028458.1">
    <property type="nucleotide sequence ID" value="NC_009257.1"/>
</dbReference>
<dbReference type="SMR" id="A4IZU6"/>
<dbReference type="GeneID" id="75264273"/>
<dbReference type="KEGG" id="ftw:FTW_1769"/>
<dbReference type="HOGENOM" id="CLU_040318_1_2_6"/>
<dbReference type="GO" id="GO:0022627">
    <property type="term" value="C:cytosolic small ribosomal subunit"/>
    <property type="evidence" value="ECO:0007669"/>
    <property type="project" value="TreeGrafter"/>
</dbReference>
<dbReference type="GO" id="GO:0003735">
    <property type="term" value="F:structural constituent of ribosome"/>
    <property type="evidence" value="ECO:0007669"/>
    <property type="project" value="InterPro"/>
</dbReference>
<dbReference type="GO" id="GO:0006412">
    <property type="term" value="P:translation"/>
    <property type="evidence" value="ECO:0007669"/>
    <property type="project" value="UniProtKB-UniRule"/>
</dbReference>
<dbReference type="CDD" id="cd01425">
    <property type="entry name" value="RPS2"/>
    <property type="match status" value="1"/>
</dbReference>
<dbReference type="FunFam" id="1.10.287.610:FF:000001">
    <property type="entry name" value="30S ribosomal protein S2"/>
    <property type="match status" value="1"/>
</dbReference>
<dbReference type="Gene3D" id="3.40.50.10490">
    <property type="entry name" value="Glucose-6-phosphate isomerase like protein, domain 1"/>
    <property type="match status" value="1"/>
</dbReference>
<dbReference type="Gene3D" id="1.10.287.610">
    <property type="entry name" value="Helix hairpin bin"/>
    <property type="match status" value="1"/>
</dbReference>
<dbReference type="HAMAP" id="MF_00291_B">
    <property type="entry name" value="Ribosomal_uS2_B"/>
    <property type="match status" value="1"/>
</dbReference>
<dbReference type="InterPro" id="IPR001865">
    <property type="entry name" value="Ribosomal_uS2"/>
</dbReference>
<dbReference type="InterPro" id="IPR005706">
    <property type="entry name" value="Ribosomal_uS2_bac/mit/plastid"/>
</dbReference>
<dbReference type="InterPro" id="IPR018130">
    <property type="entry name" value="Ribosomal_uS2_CS"/>
</dbReference>
<dbReference type="InterPro" id="IPR023591">
    <property type="entry name" value="Ribosomal_uS2_flav_dom_sf"/>
</dbReference>
<dbReference type="NCBIfam" id="TIGR01011">
    <property type="entry name" value="rpsB_bact"/>
    <property type="match status" value="1"/>
</dbReference>
<dbReference type="PANTHER" id="PTHR12534">
    <property type="entry name" value="30S RIBOSOMAL PROTEIN S2 PROKARYOTIC AND ORGANELLAR"/>
    <property type="match status" value="1"/>
</dbReference>
<dbReference type="PANTHER" id="PTHR12534:SF0">
    <property type="entry name" value="SMALL RIBOSOMAL SUBUNIT PROTEIN US2M"/>
    <property type="match status" value="1"/>
</dbReference>
<dbReference type="Pfam" id="PF00318">
    <property type="entry name" value="Ribosomal_S2"/>
    <property type="match status" value="1"/>
</dbReference>
<dbReference type="PRINTS" id="PR00395">
    <property type="entry name" value="RIBOSOMALS2"/>
</dbReference>
<dbReference type="SUPFAM" id="SSF52313">
    <property type="entry name" value="Ribosomal protein S2"/>
    <property type="match status" value="1"/>
</dbReference>
<dbReference type="PROSITE" id="PS00962">
    <property type="entry name" value="RIBOSOMAL_S2_1"/>
    <property type="match status" value="1"/>
</dbReference>
<comment type="similarity">
    <text evidence="1">Belongs to the universal ribosomal protein uS2 family.</text>
</comment>
<evidence type="ECO:0000255" key="1">
    <source>
        <dbReference type="HAMAP-Rule" id="MF_00291"/>
    </source>
</evidence>
<evidence type="ECO:0000305" key="2"/>
<keyword id="KW-0687">Ribonucleoprotein</keyword>
<keyword id="KW-0689">Ribosomal protein</keyword>
<gene>
    <name evidence="1" type="primary">rpsB</name>
    <name type="ordered locus">FTW_1769</name>
</gene>
<reference key="1">
    <citation type="journal article" date="2007" name="PLoS ONE">
        <title>Complete genomic characterization of a pathogenic A.II strain of Francisella tularensis subspecies tularensis.</title>
        <authorList>
            <person name="Beckstrom-Sternberg S.M."/>
            <person name="Auerbach R.K."/>
            <person name="Godbole S."/>
            <person name="Pearson J.V."/>
            <person name="Beckstrom-Sternberg J.S."/>
            <person name="Deng Z."/>
            <person name="Munk C."/>
            <person name="Kubota K."/>
            <person name="Zhou Y."/>
            <person name="Bruce D."/>
            <person name="Noronha J."/>
            <person name="Scheuermann R.H."/>
            <person name="Wang A."/>
            <person name="Wei X."/>
            <person name="Wang J."/>
            <person name="Hao J."/>
            <person name="Wagner D.M."/>
            <person name="Brettin T.S."/>
            <person name="Brown N."/>
            <person name="Gilna P."/>
            <person name="Keim P.S."/>
        </authorList>
    </citation>
    <scope>NUCLEOTIDE SEQUENCE [LARGE SCALE GENOMIC DNA]</scope>
    <source>
        <strain>WY96-3418</strain>
    </source>
</reference>
<sequence length="239" mass="26452">MSLMKEMLSAGVHFGHKKAFWNPQMKEYIFGINHGVHIINLEKTVPLFQDAVNFVGKTVANGGKILFVGTKRQAQDIVEAEAKRCGMPFVSHRWLGGMLTNYKTVRQSIKRLAQLEKMREDGTLESLTKKEMLQNIRTIEKLEKVLGGIKEMGGLPDAIVVIDSNKEHIAIQEAQKLGIKVVAIVDTNSNPEGIDYIIPGNDDAVKSISFYMKKFADAVIDAQGLDRAVEAKADEAAQA</sequence>
<feature type="chain" id="PRO_1000003965" description="Small ribosomal subunit protein uS2">
    <location>
        <begin position="1"/>
        <end position="239"/>
    </location>
</feature>
<protein>
    <recommendedName>
        <fullName evidence="1">Small ribosomal subunit protein uS2</fullName>
    </recommendedName>
    <alternativeName>
        <fullName evidence="2">30S ribosomal protein S2</fullName>
    </alternativeName>
</protein>
<accession>A4IZU6</accession>
<organism>
    <name type="scientific">Francisella tularensis subsp. tularensis (strain WY96-3418)</name>
    <dbReference type="NCBI Taxonomy" id="418136"/>
    <lineage>
        <taxon>Bacteria</taxon>
        <taxon>Pseudomonadati</taxon>
        <taxon>Pseudomonadota</taxon>
        <taxon>Gammaproteobacteria</taxon>
        <taxon>Thiotrichales</taxon>
        <taxon>Francisellaceae</taxon>
        <taxon>Francisella</taxon>
    </lineage>
</organism>
<name>RS2_FRATW</name>